<organism evidence="6">
    <name type="scientific">Streptococcus pneumoniae (strain Hungary19A-6)</name>
    <dbReference type="NCBI Taxonomy" id="487214"/>
    <lineage>
        <taxon>Bacteria</taxon>
        <taxon>Bacillati</taxon>
        <taxon>Bacillota</taxon>
        <taxon>Bacilli</taxon>
        <taxon>Lactobacillales</taxon>
        <taxon>Streptococcaceae</taxon>
        <taxon>Streptococcus</taxon>
    </lineage>
</organism>
<reference evidence="7" key="1">
    <citation type="journal article" date="2010" name="Genome Biol.">
        <title>Structure and dynamics of the pan-genome of Streptococcus pneumoniae and closely related species.</title>
        <authorList>
            <person name="Donati C."/>
            <person name="Hiller N.L."/>
            <person name="Tettelin H."/>
            <person name="Muzzi A."/>
            <person name="Croucher N.J."/>
            <person name="Angiuoli S.V."/>
            <person name="Oggioni M."/>
            <person name="Dunning Hotopp J.C."/>
            <person name="Hu F.Z."/>
            <person name="Riley D.R."/>
            <person name="Covacci A."/>
            <person name="Mitchell T.J."/>
            <person name="Bentley S.D."/>
            <person name="Kilian M."/>
            <person name="Ehrlich G.D."/>
            <person name="Rappuoli R."/>
            <person name="Moxon E.R."/>
            <person name="Masignani V."/>
        </authorList>
    </citation>
    <scope>NUCLEOTIDE SEQUENCE [LARGE SCALE GENOMIC DNA]</scope>
    <source>
        <strain evidence="7">Hungary19A-6</strain>
    </source>
</reference>
<reference evidence="8" key="2">
    <citation type="journal article" date="2013" name="Antimicrob. Agents Chemother.">
        <title>Heteroresistance to fosfomycin is predominant in Streptococcus pneumoniae and depends on the murA1 gene.</title>
        <authorList>
            <person name="Engel H."/>
            <person name="Gutierrez-Fernandez J."/>
            <person name="Fluckiger C."/>
            <person name="Martinez-Ripoll M."/>
            <person name="Muhlemann K."/>
            <person name="Hermoso J.A."/>
            <person name="Hilty M."/>
            <person name="Hathaway L.J."/>
        </authorList>
    </citation>
    <scope>X-RAY CRYSTALLOGRAPHY (1.80 ANGSTROMS)</scope>
    <scope>FUNCTION</scope>
    <scope>MISCELLANEOUS</scope>
    <source>
        <strain evidence="4">Hungary19A-6</strain>
    </source>
</reference>
<sequence>MRKIVINGGLPLQGEITISGAKNSVVALIPAIILADDVVTLDCVPDISDVASLVEIMELMGATVKRYDDVLEIDPRGVQNIPMPYGKINSLRASYYFYGSLLGRFGEATVGLPGGCDLGPRPIDLHLKAFEAMGATASYEGDNMKLSAKDTGLHGASIYMDTVSVGATINTMIAAVKANGRTIIENAAREPEIIDVATLLNNMGAHIRGAGTNIIIIDGVERLHGTRHQVIPDRIEAGTYISLAAAVGKGIRINNVLYEHLEGFIAKLEEMGVRMTVSEDSIFVEEQSNLKAINIKTAPYPGFATDLQQPLTPLLLRANGRGTIVDTIYEKRVNHVFELAKMDADISTTNGHILYTGGRDLRGTSVKATDLRAGAALVIAGLMAEGKTEITNIEFILRGYSDIIEKLRNLGADIRLVED</sequence>
<gene>
    <name evidence="6" type="primary">murA1</name>
    <name evidence="2" type="synonym">murA</name>
    <name evidence="6" type="ordered locus">SPH_1173</name>
</gene>
<comment type="function">
    <text evidence="2 3">Cell wall formation. Adds enolpyruvyl to UDP-N-acetylglucosamine (By similarity). Target for the antibiotic fosfomycin.</text>
</comment>
<comment type="catalytic activity">
    <reaction evidence="2">
        <text>phosphoenolpyruvate + UDP-N-acetyl-alpha-D-glucosamine = UDP-N-acetyl-3-O-(1-carboxyvinyl)-alpha-D-glucosamine + phosphate</text>
        <dbReference type="Rhea" id="RHEA:18681"/>
        <dbReference type="ChEBI" id="CHEBI:43474"/>
        <dbReference type="ChEBI" id="CHEBI:57705"/>
        <dbReference type="ChEBI" id="CHEBI:58702"/>
        <dbReference type="ChEBI" id="CHEBI:68483"/>
        <dbReference type="EC" id="2.5.1.7"/>
    </reaction>
</comment>
<comment type="pathway">
    <text evidence="2">Cell wall biogenesis; peptidoglycan biosynthesis.</text>
</comment>
<comment type="subcellular location">
    <subcellularLocation>
        <location evidence="2">Cytoplasm</location>
    </subcellularLocation>
</comment>
<comment type="miscellaneous">
    <text evidence="3">This strain of S.pneumoniae has no heteroresistance to fosfomycin unlike other strains of this bacterium in which MurA1 is required for heteroresistance along with other as yet unknown factor(s). Heteroresistance is the ability of a clonal population to grow one or several subpopulations at a frequency of 10(-7) to 10(-3) in the presence of a higher antibiotic concentration than that predicted to be effective by measurement of the minimum inhibitory concentration (MIC).</text>
</comment>
<comment type="similarity">
    <text evidence="2">Belongs to the EPSP synthase family. MurA subfamily.</text>
</comment>
<dbReference type="EC" id="2.5.1.7" evidence="2"/>
<dbReference type="EMBL" id="CP000936">
    <property type="protein sequence ID" value="ACA37082.1"/>
    <property type="molecule type" value="Genomic_DNA"/>
</dbReference>
<dbReference type="RefSeq" id="WP_001227085.1">
    <property type="nucleotide sequence ID" value="NC_010380.1"/>
</dbReference>
<dbReference type="PDB" id="3ZH4">
    <property type="method" value="X-ray"/>
    <property type="resolution" value="1.80 A"/>
    <property type="chains" value="A=1-419"/>
</dbReference>
<dbReference type="PDBsum" id="3ZH4"/>
<dbReference type="SMR" id="B1IBM3"/>
<dbReference type="KEGG" id="spv:SPH_1173"/>
<dbReference type="HOGENOM" id="CLU_027387_0_0_9"/>
<dbReference type="UniPathway" id="UPA00219"/>
<dbReference type="EvolutionaryTrace" id="B1IBM3"/>
<dbReference type="Proteomes" id="UP000002163">
    <property type="component" value="Chromosome"/>
</dbReference>
<dbReference type="GO" id="GO:0005829">
    <property type="term" value="C:cytosol"/>
    <property type="evidence" value="ECO:0000250"/>
    <property type="project" value="UniProtKB"/>
</dbReference>
<dbReference type="GO" id="GO:0008760">
    <property type="term" value="F:UDP-N-acetylglucosamine 1-carboxyvinyltransferase activity"/>
    <property type="evidence" value="ECO:0000250"/>
    <property type="project" value="UniProtKB"/>
</dbReference>
<dbReference type="GO" id="GO:0051301">
    <property type="term" value="P:cell division"/>
    <property type="evidence" value="ECO:0007669"/>
    <property type="project" value="UniProtKB-KW"/>
</dbReference>
<dbReference type="GO" id="GO:0071555">
    <property type="term" value="P:cell wall organization"/>
    <property type="evidence" value="ECO:0007669"/>
    <property type="project" value="UniProtKB-KW"/>
</dbReference>
<dbReference type="GO" id="GO:0009252">
    <property type="term" value="P:peptidoglycan biosynthetic process"/>
    <property type="evidence" value="ECO:0000250"/>
    <property type="project" value="UniProtKB"/>
</dbReference>
<dbReference type="GO" id="GO:0008360">
    <property type="term" value="P:regulation of cell shape"/>
    <property type="evidence" value="ECO:0007669"/>
    <property type="project" value="UniProtKB-KW"/>
</dbReference>
<dbReference type="GO" id="GO:0019277">
    <property type="term" value="P:UDP-N-acetylgalactosamine biosynthetic process"/>
    <property type="evidence" value="ECO:0007669"/>
    <property type="project" value="InterPro"/>
</dbReference>
<dbReference type="CDD" id="cd01555">
    <property type="entry name" value="UdpNAET"/>
    <property type="match status" value="1"/>
</dbReference>
<dbReference type="FunFam" id="3.65.10.10:FF:000001">
    <property type="entry name" value="UDP-N-acetylglucosamine 1-carboxyvinyltransferase"/>
    <property type="match status" value="1"/>
</dbReference>
<dbReference type="Gene3D" id="3.65.10.10">
    <property type="entry name" value="Enolpyruvate transferase domain"/>
    <property type="match status" value="2"/>
</dbReference>
<dbReference type="HAMAP" id="MF_00111">
    <property type="entry name" value="MurA"/>
    <property type="match status" value="1"/>
</dbReference>
<dbReference type="InterPro" id="IPR001986">
    <property type="entry name" value="Enolpyruvate_Tfrase_dom"/>
</dbReference>
<dbReference type="InterPro" id="IPR036968">
    <property type="entry name" value="Enolpyruvate_Tfrase_sf"/>
</dbReference>
<dbReference type="InterPro" id="IPR050068">
    <property type="entry name" value="MurA_subfamily"/>
</dbReference>
<dbReference type="InterPro" id="IPR013792">
    <property type="entry name" value="RNA3'P_cycl/enolpyr_Trfase_a/b"/>
</dbReference>
<dbReference type="InterPro" id="IPR005750">
    <property type="entry name" value="UDP_GlcNAc_COvinyl_MurA"/>
</dbReference>
<dbReference type="NCBIfam" id="TIGR01072">
    <property type="entry name" value="murA"/>
    <property type="match status" value="1"/>
</dbReference>
<dbReference type="NCBIfam" id="NF006873">
    <property type="entry name" value="PRK09369.1"/>
    <property type="match status" value="1"/>
</dbReference>
<dbReference type="NCBIfam" id="NF009470">
    <property type="entry name" value="PRK12830.1"/>
    <property type="match status" value="1"/>
</dbReference>
<dbReference type="PANTHER" id="PTHR43783">
    <property type="entry name" value="UDP-N-ACETYLGLUCOSAMINE 1-CARBOXYVINYLTRANSFERASE"/>
    <property type="match status" value="1"/>
</dbReference>
<dbReference type="PANTHER" id="PTHR43783:SF2">
    <property type="entry name" value="UDP-N-ACETYLGLUCOSAMINE 1-CARBOXYVINYLTRANSFERASE 2"/>
    <property type="match status" value="1"/>
</dbReference>
<dbReference type="Pfam" id="PF00275">
    <property type="entry name" value="EPSP_synthase"/>
    <property type="match status" value="1"/>
</dbReference>
<dbReference type="SUPFAM" id="SSF55205">
    <property type="entry name" value="EPT/RTPC-like"/>
    <property type="match status" value="1"/>
</dbReference>
<keyword id="KW-0002">3D-structure</keyword>
<keyword id="KW-0131">Cell cycle</keyword>
<keyword id="KW-0132">Cell division</keyword>
<keyword id="KW-0133">Cell shape</keyword>
<keyword id="KW-0961">Cell wall biogenesis/degradation</keyword>
<keyword id="KW-0963">Cytoplasm</keyword>
<keyword id="KW-0573">Peptidoglycan synthesis</keyword>
<keyword id="KW-0670">Pyruvate</keyword>
<keyword id="KW-0808">Transferase</keyword>
<feature type="chain" id="PRO_0000436447" description="UDP-N-acetylglucosamine 1-carboxyvinyltransferase">
    <location>
        <begin position="1"/>
        <end position="419"/>
    </location>
</feature>
<feature type="active site" description="Proton donor" evidence="2">
    <location>
        <position position="116"/>
    </location>
</feature>
<feature type="binding site" evidence="1">
    <location>
        <begin position="22"/>
        <end position="23"/>
    </location>
    <ligand>
        <name>phosphoenolpyruvate</name>
        <dbReference type="ChEBI" id="CHEBI:58702"/>
    </ligand>
</feature>
<feature type="binding site" evidence="1">
    <location>
        <position position="92"/>
    </location>
    <ligand>
        <name>UDP-N-acetyl-alpha-D-glucosamine</name>
        <dbReference type="ChEBI" id="CHEBI:57705"/>
    </ligand>
</feature>
<feature type="binding site" evidence="1">
    <location>
        <begin position="121"/>
        <end position="125"/>
    </location>
    <ligand>
        <name>UDP-N-acetyl-alpha-D-glucosamine</name>
        <dbReference type="ChEBI" id="CHEBI:57705"/>
    </ligand>
</feature>
<feature type="binding site" evidence="1">
    <location>
        <position position="306"/>
    </location>
    <ligand>
        <name>UDP-N-acetyl-alpha-D-glucosamine</name>
        <dbReference type="ChEBI" id="CHEBI:57705"/>
    </ligand>
</feature>
<feature type="binding site" evidence="1">
    <location>
        <position position="328"/>
    </location>
    <ligand>
        <name>UDP-N-acetyl-alpha-D-glucosamine</name>
        <dbReference type="ChEBI" id="CHEBI:57705"/>
    </ligand>
</feature>
<feature type="modified residue" description="2-(S-cysteinyl)pyruvic acid O-phosphothioketal" evidence="2">
    <location>
        <position position="116"/>
    </location>
</feature>
<feature type="strand" evidence="9">
    <location>
        <begin position="3"/>
        <end position="7"/>
    </location>
</feature>
<feature type="strand" evidence="9">
    <location>
        <begin position="12"/>
        <end position="17"/>
    </location>
</feature>
<feature type="helix" evidence="9">
    <location>
        <begin position="22"/>
        <end position="31"/>
    </location>
</feature>
<feature type="helix" evidence="9">
    <location>
        <begin position="32"/>
        <end position="34"/>
    </location>
</feature>
<feature type="strand" evidence="9">
    <location>
        <begin position="35"/>
        <end position="37"/>
    </location>
</feature>
<feature type="strand" evidence="9">
    <location>
        <begin position="39"/>
        <end position="43"/>
    </location>
</feature>
<feature type="helix" evidence="9">
    <location>
        <begin position="48"/>
        <end position="59"/>
    </location>
</feature>
<feature type="strand" evidence="9">
    <location>
        <begin position="63"/>
        <end position="67"/>
    </location>
</feature>
<feature type="strand" evidence="9">
    <location>
        <begin position="70"/>
        <end position="74"/>
    </location>
</feature>
<feature type="helix" evidence="9">
    <location>
        <begin position="75"/>
        <end position="77"/>
    </location>
</feature>
<feature type="helix" evidence="9">
    <location>
        <begin position="92"/>
        <end position="95"/>
    </location>
</feature>
<feature type="helix" evidence="9">
    <location>
        <begin position="96"/>
        <end position="105"/>
    </location>
</feature>
<feature type="strand" evidence="9">
    <location>
        <begin position="106"/>
        <end position="110"/>
    </location>
</feature>
<feature type="helix" evidence="9">
    <location>
        <begin position="122"/>
        <end position="132"/>
    </location>
</feature>
<feature type="strand" evidence="9">
    <location>
        <begin position="139"/>
        <end position="148"/>
    </location>
</feature>
<feature type="strand" evidence="9">
    <location>
        <begin position="157"/>
        <end position="159"/>
    </location>
</feature>
<feature type="helix" evidence="9">
    <location>
        <begin position="165"/>
        <end position="175"/>
    </location>
</feature>
<feature type="strand" evidence="9">
    <location>
        <begin position="178"/>
        <end position="185"/>
    </location>
</feature>
<feature type="helix" evidence="9">
    <location>
        <begin position="191"/>
        <end position="202"/>
    </location>
</feature>
<feature type="strand" evidence="9">
    <location>
        <begin position="212"/>
        <end position="218"/>
    </location>
</feature>
<feature type="strand" evidence="9">
    <location>
        <begin position="226"/>
        <end position="229"/>
    </location>
</feature>
<feature type="helix" evidence="9">
    <location>
        <begin position="234"/>
        <end position="247"/>
    </location>
</feature>
<feature type="strand" evidence="9">
    <location>
        <begin position="248"/>
        <end position="255"/>
    </location>
</feature>
<feature type="helix" evidence="9">
    <location>
        <begin position="258"/>
        <end position="260"/>
    </location>
</feature>
<feature type="helix" evidence="9">
    <location>
        <begin position="262"/>
        <end position="271"/>
    </location>
</feature>
<feature type="strand" evidence="9">
    <location>
        <begin position="275"/>
        <end position="277"/>
    </location>
</feature>
<feature type="strand" evidence="9">
    <location>
        <begin position="279"/>
        <end position="284"/>
    </location>
</feature>
<feature type="helix" evidence="9">
    <location>
        <begin position="305"/>
        <end position="307"/>
    </location>
</feature>
<feature type="helix" evidence="9">
    <location>
        <begin position="308"/>
        <end position="315"/>
    </location>
</feature>
<feature type="strand" evidence="9">
    <location>
        <begin position="318"/>
        <end position="325"/>
    </location>
</feature>
<feature type="strand" evidence="9">
    <location>
        <begin position="327"/>
        <end position="329"/>
    </location>
</feature>
<feature type="helix" evidence="9">
    <location>
        <begin position="335"/>
        <end position="341"/>
    </location>
</feature>
<feature type="strand" evidence="9">
    <location>
        <begin position="346"/>
        <end position="349"/>
    </location>
</feature>
<feature type="strand" evidence="9">
    <location>
        <begin position="352"/>
        <end position="356"/>
    </location>
</feature>
<feature type="strand" evidence="9">
    <location>
        <begin position="365"/>
        <end position="367"/>
    </location>
</feature>
<feature type="helix" evidence="9">
    <location>
        <begin position="371"/>
        <end position="383"/>
    </location>
</feature>
<feature type="strand" evidence="9">
    <location>
        <begin position="384"/>
        <end position="391"/>
    </location>
</feature>
<feature type="helix" evidence="9">
    <location>
        <begin position="394"/>
        <end position="397"/>
    </location>
</feature>
<feature type="helix" evidence="9">
    <location>
        <begin position="403"/>
        <end position="408"/>
    </location>
</feature>
<feature type="turn" evidence="9">
    <location>
        <begin position="409"/>
        <end position="411"/>
    </location>
</feature>
<feature type="strand" evidence="9">
    <location>
        <begin position="413"/>
        <end position="417"/>
    </location>
</feature>
<name>MURA1_STRPI</name>
<proteinExistence type="evidence at protein level"/>
<evidence type="ECO:0000250" key="1">
    <source>
        <dbReference type="UniProtKB" id="P0A749"/>
    </source>
</evidence>
<evidence type="ECO:0000255" key="2">
    <source>
        <dbReference type="HAMAP-Rule" id="MF_00111"/>
    </source>
</evidence>
<evidence type="ECO:0000269" key="3">
    <source>
    </source>
</evidence>
<evidence type="ECO:0000303" key="4">
    <source>
    </source>
</evidence>
<evidence type="ECO:0000305" key="5"/>
<evidence type="ECO:0000312" key="6">
    <source>
        <dbReference type="EMBL" id="ACA37082.1"/>
    </source>
</evidence>
<evidence type="ECO:0000312" key="7">
    <source>
        <dbReference type="Proteomes" id="UP000002163"/>
    </source>
</evidence>
<evidence type="ECO:0007744" key="8">
    <source>
        <dbReference type="PDB" id="3ZH4"/>
    </source>
</evidence>
<evidence type="ECO:0007829" key="9">
    <source>
        <dbReference type="PDB" id="3ZH4"/>
    </source>
</evidence>
<protein>
    <recommendedName>
        <fullName evidence="2">UDP-N-acetylglucosamine 1-carboxyvinyltransferase</fullName>
        <ecNumber evidence="2">2.5.1.7</ecNumber>
    </recommendedName>
    <alternativeName>
        <fullName evidence="2">Enoylpyruvate transferase</fullName>
        <shortName evidence="5">EPT</shortName>
    </alternativeName>
    <alternativeName>
        <fullName evidence="2">UDP-N-acetylglucosamine enolpyruvyl transferase</fullName>
    </alternativeName>
</protein>
<accession>B1IBM3</accession>